<evidence type="ECO:0000255" key="1">
    <source>
        <dbReference type="HAMAP-Rule" id="MF_00772"/>
    </source>
</evidence>
<gene>
    <name evidence="1" type="primary">ogt</name>
    <name type="ordered locus">MA_4322</name>
</gene>
<comment type="function">
    <text evidence="1">Involved in the cellular defense against the biological effects of O6-methylguanine (O6-MeG) and O4-methylthymine (O4-MeT) in DNA. Repairs the methylated nucleobase in DNA by stoichiometrically transferring the methyl group to a cysteine residue in the enzyme. This is a suicide reaction: the enzyme is irreversibly inactivated.</text>
</comment>
<comment type="catalytic activity">
    <reaction evidence="1">
        <text>a 6-O-methyl-2'-deoxyguanosine in DNA + L-cysteinyl-[protein] = S-methyl-L-cysteinyl-[protein] + a 2'-deoxyguanosine in DNA</text>
        <dbReference type="Rhea" id="RHEA:24000"/>
        <dbReference type="Rhea" id="RHEA-COMP:10131"/>
        <dbReference type="Rhea" id="RHEA-COMP:10132"/>
        <dbReference type="Rhea" id="RHEA-COMP:11367"/>
        <dbReference type="Rhea" id="RHEA-COMP:11368"/>
        <dbReference type="ChEBI" id="CHEBI:29950"/>
        <dbReference type="ChEBI" id="CHEBI:82612"/>
        <dbReference type="ChEBI" id="CHEBI:85445"/>
        <dbReference type="ChEBI" id="CHEBI:85448"/>
        <dbReference type="EC" id="2.1.1.63"/>
    </reaction>
</comment>
<comment type="catalytic activity">
    <reaction evidence="1">
        <text>a 4-O-methyl-thymidine in DNA + L-cysteinyl-[protein] = a thymidine in DNA + S-methyl-L-cysteinyl-[protein]</text>
        <dbReference type="Rhea" id="RHEA:53428"/>
        <dbReference type="Rhea" id="RHEA-COMP:10131"/>
        <dbReference type="Rhea" id="RHEA-COMP:10132"/>
        <dbReference type="Rhea" id="RHEA-COMP:13555"/>
        <dbReference type="Rhea" id="RHEA-COMP:13556"/>
        <dbReference type="ChEBI" id="CHEBI:29950"/>
        <dbReference type="ChEBI" id="CHEBI:82612"/>
        <dbReference type="ChEBI" id="CHEBI:137386"/>
        <dbReference type="ChEBI" id="CHEBI:137387"/>
        <dbReference type="EC" id="2.1.1.63"/>
    </reaction>
</comment>
<comment type="subcellular location">
    <subcellularLocation>
        <location evidence="1">Cytoplasm</location>
    </subcellularLocation>
</comment>
<comment type="miscellaneous">
    <text>This enzyme catalyzes only one turnover and therefore is not strictly catalytic. According to one definition, an enzyme is a biocatalyst that acts repeatedly and over many reaction cycles.</text>
</comment>
<comment type="similarity">
    <text evidence="1">Belongs to the MGMT family.</text>
</comment>
<sequence>MYYAIFESPIGPILLAGDEEGLKYVNFMKGKKKIEVPDSWVENEEFFREASRQLEAYFAGELKSFDVKLAPEGTEFQKSVWNALKEIPYGETRTYGEIAKNIGNPKASRAVGLANNRNPIAIIVPCHRVIGANGKLTGYASGLDIKEFLLKLEGSC</sequence>
<proteinExistence type="inferred from homology"/>
<keyword id="KW-0963">Cytoplasm</keyword>
<keyword id="KW-0227">DNA damage</keyword>
<keyword id="KW-0234">DNA repair</keyword>
<keyword id="KW-0489">Methyltransferase</keyword>
<keyword id="KW-1185">Reference proteome</keyword>
<keyword id="KW-0808">Transferase</keyword>
<organism>
    <name type="scientific">Methanosarcina acetivorans (strain ATCC 35395 / DSM 2834 / JCM 12185 / C2A)</name>
    <dbReference type="NCBI Taxonomy" id="188937"/>
    <lineage>
        <taxon>Archaea</taxon>
        <taxon>Methanobacteriati</taxon>
        <taxon>Methanobacteriota</taxon>
        <taxon>Stenosarchaea group</taxon>
        <taxon>Methanomicrobia</taxon>
        <taxon>Methanosarcinales</taxon>
        <taxon>Methanosarcinaceae</taxon>
        <taxon>Methanosarcina</taxon>
    </lineage>
</organism>
<reference key="1">
    <citation type="journal article" date="2002" name="Genome Res.">
        <title>The genome of Methanosarcina acetivorans reveals extensive metabolic and physiological diversity.</title>
        <authorList>
            <person name="Galagan J.E."/>
            <person name="Nusbaum C."/>
            <person name="Roy A."/>
            <person name="Endrizzi M.G."/>
            <person name="Macdonald P."/>
            <person name="FitzHugh W."/>
            <person name="Calvo S."/>
            <person name="Engels R."/>
            <person name="Smirnov S."/>
            <person name="Atnoor D."/>
            <person name="Brown A."/>
            <person name="Allen N."/>
            <person name="Naylor J."/>
            <person name="Stange-Thomann N."/>
            <person name="DeArellano K."/>
            <person name="Johnson R."/>
            <person name="Linton L."/>
            <person name="McEwan P."/>
            <person name="McKernan K."/>
            <person name="Talamas J."/>
            <person name="Tirrell A."/>
            <person name="Ye W."/>
            <person name="Zimmer A."/>
            <person name="Barber R.D."/>
            <person name="Cann I."/>
            <person name="Graham D.E."/>
            <person name="Grahame D.A."/>
            <person name="Guss A.M."/>
            <person name="Hedderich R."/>
            <person name="Ingram-Smith C."/>
            <person name="Kuettner H.C."/>
            <person name="Krzycki J.A."/>
            <person name="Leigh J.A."/>
            <person name="Li W."/>
            <person name="Liu J."/>
            <person name="Mukhopadhyay B."/>
            <person name="Reeve J.N."/>
            <person name="Smith K."/>
            <person name="Springer T.A."/>
            <person name="Umayam L.A."/>
            <person name="White O."/>
            <person name="White R.H."/>
            <person name="de Macario E.C."/>
            <person name="Ferry J.G."/>
            <person name="Jarrell K.F."/>
            <person name="Jing H."/>
            <person name="Macario A.J.L."/>
            <person name="Paulsen I.T."/>
            <person name="Pritchett M."/>
            <person name="Sowers K.R."/>
            <person name="Swanson R.V."/>
            <person name="Zinder S.H."/>
            <person name="Lander E."/>
            <person name="Metcalf W.W."/>
            <person name="Birren B."/>
        </authorList>
    </citation>
    <scope>NUCLEOTIDE SEQUENCE [LARGE SCALE GENOMIC DNA]</scope>
    <source>
        <strain>ATCC 35395 / DSM 2834 / JCM 12185 / C2A</strain>
    </source>
</reference>
<name>OGT_METAC</name>
<dbReference type="EC" id="2.1.1.63" evidence="1"/>
<dbReference type="EMBL" id="AE010299">
    <property type="protein sequence ID" value="AAM07666.1"/>
    <property type="molecule type" value="Genomic_DNA"/>
</dbReference>
<dbReference type="RefSeq" id="WP_011024203.1">
    <property type="nucleotide sequence ID" value="NC_003552.1"/>
</dbReference>
<dbReference type="SMR" id="Q8TI34"/>
<dbReference type="FunCoup" id="Q8TI34">
    <property type="interactions" value="3"/>
</dbReference>
<dbReference type="STRING" id="188937.MA_4322"/>
<dbReference type="EnsemblBacteria" id="AAM07666">
    <property type="protein sequence ID" value="AAM07666"/>
    <property type="gene ID" value="MA_4322"/>
</dbReference>
<dbReference type="GeneID" id="1476216"/>
<dbReference type="KEGG" id="mac:MA_4322"/>
<dbReference type="HOGENOM" id="CLU_000445_52_2_2"/>
<dbReference type="InParanoid" id="Q8TI34"/>
<dbReference type="OrthoDB" id="372118at2157"/>
<dbReference type="PhylomeDB" id="Q8TI34"/>
<dbReference type="Proteomes" id="UP000002487">
    <property type="component" value="Chromosome"/>
</dbReference>
<dbReference type="GO" id="GO:0005737">
    <property type="term" value="C:cytoplasm"/>
    <property type="evidence" value="ECO:0007669"/>
    <property type="project" value="UniProtKB-SubCell"/>
</dbReference>
<dbReference type="GO" id="GO:0003908">
    <property type="term" value="F:methylated-DNA-[protein]-cysteine S-methyltransferase activity"/>
    <property type="evidence" value="ECO:0007669"/>
    <property type="project" value="UniProtKB-UniRule"/>
</dbReference>
<dbReference type="GO" id="GO:0006307">
    <property type="term" value="P:DNA alkylation repair"/>
    <property type="evidence" value="ECO:0007669"/>
    <property type="project" value="UniProtKB-UniRule"/>
</dbReference>
<dbReference type="GO" id="GO:0032259">
    <property type="term" value="P:methylation"/>
    <property type="evidence" value="ECO:0007669"/>
    <property type="project" value="UniProtKB-KW"/>
</dbReference>
<dbReference type="CDD" id="cd06445">
    <property type="entry name" value="ATase"/>
    <property type="match status" value="1"/>
</dbReference>
<dbReference type="FunFam" id="1.10.10.10:FF:000214">
    <property type="entry name" value="Methylated-DNA--protein-cysteine methyltransferase"/>
    <property type="match status" value="1"/>
</dbReference>
<dbReference type="Gene3D" id="3.30.160.70">
    <property type="entry name" value="Methylated DNA-protein cysteine methyltransferase domain"/>
    <property type="match status" value="1"/>
</dbReference>
<dbReference type="Gene3D" id="1.10.10.10">
    <property type="entry name" value="Winged helix-like DNA-binding domain superfamily/Winged helix DNA-binding domain"/>
    <property type="match status" value="1"/>
</dbReference>
<dbReference type="HAMAP" id="MF_00772">
    <property type="entry name" value="OGT"/>
    <property type="match status" value="1"/>
</dbReference>
<dbReference type="InterPro" id="IPR001497">
    <property type="entry name" value="MethylDNA_cys_MeTrfase_AS"/>
</dbReference>
<dbReference type="InterPro" id="IPR014048">
    <property type="entry name" value="MethylDNA_cys_MeTrfase_DNA-bd"/>
</dbReference>
<dbReference type="InterPro" id="IPR036217">
    <property type="entry name" value="MethylDNA_cys_MeTrfase_DNAb"/>
</dbReference>
<dbReference type="InterPro" id="IPR008332">
    <property type="entry name" value="MethylG_MeTrfase_N"/>
</dbReference>
<dbReference type="InterPro" id="IPR023546">
    <property type="entry name" value="MGMT"/>
</dbReference>
<dbReference type="InterPro" id="IPR036631">
    <property type="entry name" value="MGMT_N_sf"/>
</dbReference>
<dbReference type="InterPro" id="IPR036388">
    <property type="entry name" value="WH-like_DNA-bd_sf"/>
</dbReference>
<dbReference type="NCBIfam" id="TIGR00589">
    <property type="entry name" value="ogt"/>
    <property type="match status" value="1"/>
</dbReference>
<dbReference type="PANTHER" id="PTHR10815">
    <property type="entry name" value="METHYLATED-DNA--PROTEIN-CYSTEINE METHYLTRANSFERASE"/>
    <property type="match status" value="1"/>
</dbReference>
<dbReference type="PANTHER" id="PTHR10815:SF5">
    <property type="entry name" value="METHYLATED-DNA--PROTEIN-CYSTEINE METHYLTRANSFERASE"/>
    <property type="match status" value="1"/>
</dbReference>
<dbReference type="Pfam" id="PF01035">
    <property type="entry name" value="DNA_binding_1"/>
    <property type="match status" value="1"/>
</dbReference>
<dbReference type="Pfam" id="PF02870">
    <property type="entry name" value="Methyltransf_1N"/>
    <property type="match status" value="1"/>
</dbReference>
<dbReference type="SUPFAM" id="SSF53155">
    <property type="entry name" value="Methylated DNA-protein cysteine methyltransferase domain"/>
    <property type="match status" value="1"/>
</dbReference>
<dbReference type="SUPFAM" id="SSF46767">
    <property type="entry name" value="Methylated DNA-protein cysteine methyltransferase, C-terminal domain"/>
    <property type="match status" value="1"/>
</dbReference>
<dbReference type="PROSITE" id="PS00374">
    <property type="entry name" value="MGMT"/>
    <property type="match status" value="1"/>
</dbReference>
<feature type="chain" id="PRO_0000139376" description="Methylated-DNA--protein-cysteine methyltransferase">
    <location>
        <begin position="1"/>
        <end position="156"/>
    </location>
</feature>
<feature type="active site" description="Nucleophile; methyl group acceptor" evidence="1">
    <location>
        <position position="126"/>
    </location>
</feature>
<protein>
    <recommendedName>
        <fullName evidence="1">Methylated-DNA--protein-cysteine methyltransferase</fullName>
        <ecNumber evidence="1">2.1.1.63</ecNumber>
    </recommendedName>
    <alternativeName>
        <fullName evidence="1">6-O-methylguanine-DNA methyltransferase</fullName>
        <shortName evidence="1">MGMT</shortName>
    </alternativeName>
    <alternativeName>
        <fullName evidence="1">O-6-methylguanine-DNA-alkyltransferase</fullName>
    </alternativeName>
</protein>
<accession>Q8TI34</accession>